<comment type="function">
    <text evidence="1">May play a role in signal transduction pathways that involve calcium as a second messenger.</text>
</comment>
<comment type="catalytic activity">
    <reaction>
        <text>L-seryl-[protein] + ATP = O-phospho-L-seryl-[protein] + ADP + H(+)</text>
        <dbReference type="Rhea" id="RHEA:17989"/>
        <dbReference type="Rhea" id="RHEA-COMP:9863"/>
        <dbReference type="Rhea" id="RHEA-COMP:11604"/>
        <dbReference type="ChEBI" id="CHEBI:15378"/>
        <dbReference type="ChEBI" id="CHEBI:29999"/>
        <dbReference type="ChEBI" id="CHEBI:30616"/>
        <dbReference type="ChEBI" id="CHEBI:83421"/>
        <dbReference type="ChEBI" id="CHEBI:456216"/>
        <dbReference type="EC" id="2.7.11.1"/>
    </reaction>
</comment>
<comment type="catalytic activity">
    <reaction>
        <text>L-threonyl-[protein] + ATP = O-phospho-L-threonyl-[protein] + ADP + H(+)</text>
        <dbReference type="Rhea" id="RHEA:46608"/>
        <dbReference type="Rhea" id="RHEA-COMP:11060"/>
        <dbReference type="Rhea" id="RHEA-COMP:11605"/>
        <dbReference type="ChEBI" id="CHEBI:15378"/>
        <dbReference type="ChEBI" id="CHEBI:30013"/>
        <dbReference type="ChEBI" id="CHEBI:30616"/>
        <dbReference type="ChEBI" id="CHEBI:61977"/>
        <dbReference type="ChEBI" id="CHEBI:456216"/>
        <dbReference type="EC" id="2.7.11.1"/>
    </reaction>
</comment>
<comment type="activity regulation">
    <text evidence="1">Activated by calcium and calmodulin. Autophosphorylation may play an important role in the regulation of the kinase activity (By similarity).</text>
</comment>
<comment type="subunit">
    <text evidence="1">Binds calmodulin (CaM) in a calcium-dependent manner.</text>
</comment>
<comment type="subcellular location">
    <subcellularLocation>
        <location evidence="1">Membrane</location>
        <topology evidence="1">Lipid-anchor</topology>
        <orientation evidence="1">Cytoplasmic side</orientation>
    </subcellularLocation>
</comment>
<comment type="alternative products">
    <event type="alternative splicing"/>
    <isoform>
        <id>Q9SCS2-1</id>
        <name>1</name>
        <sequence type="displayed"/>
    </isoform>
    <isoform>
        <id>Q9SCS2-2</id>
        <name>2</name>
        <sequence type="described" ref="VSP_044531"/>
    </isoform>
</comment>
<comment type="domain">
    <text evidence="1">There are 3 contiguous domains conserved in the CDPK subfamily: a kinase domain, an autoinhibitory (junction) domain and a calmodulin-like domain. The autoinhibitory domain (415-445) inactivates kinase activity under calcium-free conditions (By similarity).</text>
</comment>
<comment type="similarity">
    <text evidence="4">Belongs to the protein kinase superfamily. Ser/Thr protein kinase family. CDPK subfamily.</text>
</comment>
<comment type="sequence caution" evidence="7">
    <conflict type="frameshift">
        <sequence resource="EMBL-CDS" id="BAF00328"/>
    </conflict>
</comment>
<organism>
    <name type="scientific">Arabidopsis thaliana</name>
    <name type="common">Mouse-ear cress</name>
    <dbReference type="NCBI Taxonomy" id="3702"/>
    <lineage>
        <taxon>Eukaryota</taxon>
        <taxon>Viridiplantae</taxon>
        <taxon>Streptophyta</taxon>
        <taxon>Embryophyta</taxon>
        <taxon>Tracheophyta</taxon>
        <taxon>Spermatophyta</taxon>
        <taxon>Magnoliopsida</taxon>
        <taxon>eudicotyledons</taxon>
        <taxon>Gunneridae</taxon>
        <taxon>Pentapetalae</taxon>
        <taxon>rosids</taxon>
        <taxon>malvids</taxon>
        <taxon>Brassicales</taxon>
        <taxon>Brassicaceae</taxon>
        <taxon>Camelineae</taxon>
        <taxon>Arabidopsis</taxon>
    </lineage>
</organism>
<feature type="initiator methionine" description="Removed" evidence="3">
    <location>
        <position position="1"/>
    </location>
</feature>
<feature type="chain" id="PRO_0000420532" description="CDPK-related kinase 5">
    <location>
        <begin position="2"/>
        <end position="601"/>
    </location>
</feature>
<feature type="domain" description="Protein kinase" evidence="4">
    <location>
        <begin position="148"/>
        <end position="410"/>
    </location>
</feature>
<feature type="domain" description="EF-hand 1">
    <location>
        <begin position="452"/>
        <end position="488"/>
    </location>
</feature>
<feature type="domain" description="EF-hand 2">
    <location>
        <begin position="489"/>
        <end position="524"/>
    </location>
</feature>
<feature type="domain" description="EF-hand 3">
    <location>
        <begin position="525"/>
        <end position="564"/>
    </location>
</feature>
<feature type="domain" description="EF-hand 4">
    <location>
        <begin position="567"/>
        <end position="596"/>
    </location>
</feature>
<feature type="region of interest" description="Disordered" evidence="6">
    <location>
        <begin position="1"/>
        <end position="55"/>
    </location>
</feature>
<feature type="region of interest" description="Disordered" evidence="6">
    <location>
        <begin position="70"/>
        <end position="98"/>
    </location>
</feature>
<feature type="region of interest" description="Autoinhibitory domain" evidence="1">
    <location>
        <begin position="415"/>
        <end position="445"/>
    </location>
</feature>
<feature type="region of interest" description="Calmodulin binding (CaMBD)" evidence="1">
    <location>
        <begin position="434"/>
        <end position="454"/>
    </location>
</feature>
<feature type="compositionally biased region" description="Polar residues" evidence="6">
    <location>
        <begin position="1"/>
        <end position="19"/>
    </location>
</feature>
<feature type="compositionally biased region" description="Low complexity" evidence="6">
    <location>
        <begin position="26"/>
        <end position="35"/>
    </location>
</feature>
<feature type="compositionally biased region" description="Polar residues" evidence="6">
    <location>
        <begin position="36"/>
        <end position="48"/>
    </location>
</feature>
<feature type="active site" description="Proton acceptor" evidence="4 5">
    <location>
        <position position="276"/>
    </location>
</feature>
<feature type="binding site" evidence="4">
    <location>
        <begin position="154"/>
        <end position="162"/>
    </location>
    <ligand>
        <name>ATP</name>
        <dbReference type="ChEBI" id="CHEBI:30616"/>
    </ligand>
</feature>
<feature type="binding site" evidence="4">
    <location>
        <position position="180"/>
    </location>
    <ligand>
        <name>ATP</name>
        <dbReference type="ChEBI" id="CHEBI:30616"/>
    </ligand>
</feature>
<feature type="binding site" evidence="1">
    <location>
        <position position="467"/>
    </location>
    <ligand>
        <name>Ca(2+)</name>
        <dbReference type="ChEBI" id="CHEBI:29108"/>
        <label>1</label>
    </ligand>
</feature>
<feature type="binding site" evidence="1">
    <location>
        <position position="469"/>
    </location>
    <ligand>
        <name>Ca(2+)</name>
        <dbReference type="ChEBI" id="CHEBI:29108"/>
        <label>1</label>
    </ligand>
</feature>
<feature type="binding site" evidence="1">
    <location>
        <position position="471"/>
    </location>
    <ligand>
        <name>Ca(2+)</name>
        <dbReference type="ChEBI" id="CHEBI:29108"/>
        <label>1</label>
    </ligand>
</feature>
<feature type="binding site" evidence="1">
    <location>
        <position position="476"/>
    </location>
    <ligand>
        <name>Ca(2+)</name>
        <dbReference type="ChEBI" id="CHEBI:29108"/>
        <label>1</label>
    </ligand>
</feature>
<feature type="binding site" evidence="1">
    <location>
        <position position="508"/>
    </location>
    <ligand>
        <name>Ca(2+)</name>
        <dbReference type="ChEBI" id="CHEBI:29108"/>
        <label>2</label>
    </ligand>
</feature>
<feature type="binding site" evidence="1">
    <location>
        <position position="513"/>
    </location>
    <ligand>
        <name>Ca(2+)</name>
        <dbReference type="ChEBI" id="CHEBI:29108"/>
        <label>2</label>
    </ligand>
</feature>
<feature type="binding site" evidence="1">
    <location>
        <position position="546"/>
    </location>
    <ligand>
        <name>Ca(2+)</name>
        <dbReference type="ChEBI" id="CHEBI:29108"/>
        <label>3</label>
    </ligand>
</feature>
<feature type="binding site" evidence="1">
    <location>
        <position position="553"/>
    </location>
    <ligand>
        <name>Ca(2+)</name>
        <dbReference type="ChEBI" id="CHEBI:29108"/>
        <label>3</label>
    </ligand>
</feature>
<feature type="binding site" evidence="1">
    <location>
        <position position="578"/>
    </location>
    <ligand>
        <name>Ca(2+)</name>
        <dbReference type="ChEBI" id="CHEBI:29108"/>
        <label>4</label>
    </ligand>
</feature>
<feature type="binding site" evidence="1">
    <location>
        <position position="580"/>
    </location>
    <ligand>
        <name>Ca(2+)</name>
        <dbReference type="ChEBI" id="CHEBI:29108"/>
        <label>4</label>
    </ligand>
</feature>
<feature type="modified residue" description="Phosphoserine" evidence="2">
    <location>
        <position position="316"/>
    </location>
</feature>
<feature type="modified residue" description="Phosphoserine" evidence="2">
    <location>
        <position position="582"/>
    </location>
</feature>
<feature type="lipid moiety-binding region" description="N-myristoyl glycine" evidence="1">
    <location>
        <position position="2"/>
    </location>
</feature>
<feature type="splice variant" id="VSP_044531" description="In isoform 2." evidence="7">
    <original>P</original>
    <variation>PGKALRLYAICKLRFQNLETSICLYALTIAFA</variation>
    <location>
        <position position="306"/>
    </location>
</feature>
<feature type="sequence conflict" description="In Ref. 5; BAF00328." evidence="7" ref="5">
    <original>T</original>
    <variation>S</variation>
    <location>
        <position position="72"/>
    </location>
</feature>
<feature type="sequence conflict" description="In Ref. 5; BAF00328." evidence="7" ref="5">
    <original>V</original>
    <variation>I</variation>
    <location>
        <position position="342"/>
    </location>
</feature>
<feature type="sequence conflict" description="In Ref. 1; AAL30814 and 2; CAA70572." evidence="7" ref="1 2">
    <original>L</original>
    <variation>Q</variation>
    <location>
        <position position="590"/>
    </location>
</feature>
<proteinExistence type="evidence at transcript level"/>
<dbReference type="EC" id="2.7.11.1"/>
<dbReference type="EMBL" id="AF435446">
    <property type="protein sequence ID" value="AAL30814.1"/>
    <property type="molecule type" value="mRNA"/>
</dbReference>
<dbReference type="EMBL" id="Y09418">
    <property type="protein sequence ID" value="CAA70572.1"/>
    <property type="molecule type" value="mRNA"/>
</dbReference>
<dbReference type="EMBL" id="AL133363">
    <property type="protein sequence ID" value="CAB62482.1"/>
    <property type="molecule type" value="Genomic_DNA"/>
</dbReference>
<dbReference type="EMBL" id="CP002686">
    <property type="protein sequence ID" value="AEE78676.1"/>
    <property type="molecule type" value="Genomic_DNA"/>
</dbReference>
<dbReference type="EMBL" id="CP002686">
    <property type="protein sequence ID" value="AEE78677.1"/>
    <property type="molecule type" value="Genomic_DNA"/>
</dbReference>
<dbReference type="EMBL" id="AK228391">
    <property type="protein sequence ID" value="BAF00328.1"/>
    <property type="status" value="ALT_FRAME"/>
    <property type="molecule type" value="mRNA"/>
</dbReference>
<dbReference type="PIR" id="T46084">
    <property type="entry name" value="T46084"/>
</dbReference>
<dbReference type="RefSeq" id="NP_001190048.1">
    <molecule id="Q9SCS2-2"/>
    <property type="nucleotide sequence ID" value="NM_001203119.1"/>
</dbReference>
<dbReference type="RefSeq" id="NP_190622.1">
    <molecule id="Q9SCS2-1"/>
    <property type="nucleotide sequence ID" value="NM_114913.4"/>
</dbReference>
<dbReference type="SMR" id="Q9SCS2"/>
<dbReference type="FunCoup" id="Q9SCS2">
    <property type="interactions" value="590"/>
</dbReference>
<dbReference type="STRING" id="3702.Q9SCS2"/>
<dbReference type="iPTMnet" id="Q9SCS2"/>
<dbReference type="PaxDb" id="3702-AT3G50530.2"/>
<dbReference type="ProteomicsDB" id="239150">
    <molecule id="Q9SCS2-1"/>
</dbReference>
<dbReference type="EnsemblPlants" id="AT3G50530.1">
    <molecule id="Q9SCS2-1"/>
    <property type="protein sequence ID" value="AT3G50530.1"/>
    <property type="gene ID" value="AT3G50530"/>
</dbReference>
<dbReference type="EnsemblPlants" id="AT3G50530.2">
    <molecule id="Q9SCS2-2"/>
    <property type="protein sequence ID" value="AT3G50530.2"/>
    <property type="gene ID" value="AT3G50530"/>
</dbReference>
<dbReference type="Gramene" id="AT3G50530.1">
    <molecule id="Q9SCS2-1"/>
    <property type="protein sequence ID" value="AT3G50530.1"/>
    <property type="gene ID" value="AT3G50530"/>
</dbReference>
<dbReference type="Gramene" id="AT3G50530.2">
    <molecule id="Q9SCS2-2"/>
    <property type="protein sequence ID" value="AT3G50530.2"/>
    <property type="gene ID" value="AT3G50530"/>
</dbReference>
<dbReference type="KEGG" id="ath:AT3G50530"/>
<dbReference type="Araport" id="AT3G50530"/>
<dbReference type="TAIR" id="AT3G50530">
    <property type="gene designation" value="CRK"/>
</dbReference>
<dbReference type="eggNOG" id="KOG0032">
    <property type="taxonomic scope" value="Eukaryota"/>
</dbReference>
<dbReference type="InParanoid" id="Q9SCS2"/>
<dbReference type="OMA" id="HDAFEDH"/>
<dbReference type="OrthoDB" id="40902at2759"/>
<dbReference type="PhylomeDB" id="Q9SCS2"/>
<dbReference type="PRO" id="PR:Q9SCS2"/>
<dbReference type="Proteomes" id="UP000006548">
    <property type="component" value="Chromosome 3"/>
</dbReference>
<dbReference type="ExpressionAtlas" id="Q9SCS2">
    <property type="expression patterns" value="baseline and differential"/>
</dbReference>
<dbReference type="GO" id="GO:0016020">
    <property type="term" value="C:membrane"/>
    <property type="evidence" value="ECO:0007669"/>
    <property type="project" value="UniProtKB-SubCell"/>
</dbReference>
<dbReference type="GO" id="GO:0005524">
    <property type="term" value="F:ATP binding"/>
    <property type="evidence" value="ECO:0007669"/>
    <property type="project" value="UniProtKB-KW"/>
</dbReference>
<dbReference type="GO" id="GO:0046872">
    <property type="term" value="F:metal ion binding"/>
    <property type="evidence" value="ECO:0007669"/>
    <property type="project" value="UniProtKB-KW"/>
</dbReference>
<dbReference type="GO" id="GO:0106310">
    <property type="term" value="F:protein serine kinase activity"/>
    <property type="evidence" value="ECO:0007669"/>
    <property type="project" value="RHEA"/>
</dbReference>
<dbReference type="GO" id="GO:0004674">
    <property type="term" value="F:protein serine/threonine kinase activity"/>
    <property type="evidence" value="ECO:0007669"/>
    <property type="project" value="UniProtKB-KW"/>
</dbReference>
<dbReference type="CDD" id="cd05117">
    <property type="entry name" value="STKc_CAMK"/>
    <property type="match status" value="1"/>
</dbReference>
<dbReference type="FunFam" id="1.10.510.10:FF:001864">
    <property type="entry name" value="Calcium-dependent protein kinase SK5"/>
    <property type="match status" value="1"/>
</dbReference>
<dbReference type="FunFam" id="1.10.238.10:FF:000085">
    <property type="entry name" value="CDPK-related kinase 1"/>
    <property type="match status" value="1"/>
</dbReference>
<dbReference type="FunFam" id="3.30.200.20:FF:000101">
    <property type="entry name" value="CDPK-related kinase 1"/>
    <property type="match status" value="1"/>
</dbReference>
<dbReference type="FunFam" id="1.10.510.10:FF:001294">
    <property type="entry name" value="CDPK-related kinase 3"/>
    <property type="match status" value="1"/>
</dbReference>
<dbReference type="Gene3D" id="1.10.238.10">
    <property type="entry name" value="EF-hand"/>
    <property type="match status" value="2"/>
</dbReference>
<dbReference type="Gene3D" id="3.30.200.20">
    <property type="entry name" value="Phosphorylase Kinase, domain 1"/>
    <property type="match status" value="1"/>
</dbReference>
<dbReference type="Gene3D" id="1.10.510.10">
    <property type="entry name" value="Transferase(Phosphotransferase) domain 1"/>
    <property type="match status" value="1"/>
</dbReference>
<dbReference type="InterPro" id="IPR050205">
    <property type="entry name" value="CDPK_Ser/Thr_kinases"/>
</dbReference>
<dbReference type="InterPro" id="IPR011992">
    <property type="entry name" value="EF-hand-dom_pair"/>
</dbReference>
<dbReference type="InterPro" id="IPR011009">
    <property type="entry name" value="Kinase-like_dom_sf"/>
</dbReference>
<dbReference type="InterPro" id="IPR000719">
    <property type="entry name" value="Prot_kinase_dom"/>
</dbReference>
<dbReference type="InterPro" id="IPR017441">
    <property type="entry name" value="Protein_kinase_ATP_BS"/>
</dbReference>
<dbReference type="InterPro" id="IPR008271">
    <property type="entry name" value="Ser/Thr_kinase_AS"/>
</dbReference>
<dbReference type="PANTHER" id="PTHR24349">
    <property type="entry name" value="SERINE/THREONINE-PROTEIN KINASE"/>
    <property type="match status" value="1"/>
</dbReference>
<dbReference type="Pfam" id="PF00069">
    <property type="entry name" value="Pkinase"/>
    <property type="match status" value="1"/>
</dbReference>
<dbReference type="SMART" id="SM00220">
    <property type="entry name" value="S_TKc"/>
    <property type="match status" value="1"/>
</dbReference>
<dbReference type="SUPFAM" id="SSF47473">
    <property type="entry name" value="EF-hand"/>
    <property type="match status" value="1"/>
</dbReference>
<dbReference type="SUPFAM" id="SSF56112">
    <property type="entry name" value="Protein kinase-like (PK-like)"/>
    <property type="match status" value="1"/>
</dbReference>
<dbReference type="PROSITE" id="PS00107">
    <property type="entry name" value="PROTEIN_KINASE_ATP"/>
    <property type="match status" value="1"/>
</dbReference>
<dbReference type="PROSITE" id="PS50011">
    <property type="entry name" value="PROTEIN_KINASE_DOM"/>
    <property type="match status" value="1"/>
</dbReference>
<dbReference type="PROSITE" id="PS00108">
    <property type="entry name" value="PROTEIN_KINASE_ST"/>
    <property type="match status" value="1"/>
</dbReference>
<accession>Q9SCS2</accession>
<accession>F4J0N4</accession>
<accession>O04290</accession>
<accession>Q0WRC1</accession>
<sequence length="601" mass="66991">MGLCTSKPNSSNSDQTPARNSPLPASESVKPSSSSVNGEDQCVTTTNNEGKKSPFFPFYSPSPAHYFFSKKTPARSPATNSTNSTPKRFFKRPFPPPSPAKHIRAVLARRHGSVKPNSSAIPEGSEAEGGGVGLDKSFGFSKSFASKYELGDEVGRGHFGYTCAAKFKKGDNKGQQVAVKVIPKAKMTTAIAIEDVRREVKILRALSGHNNLPHFYDAYEDHDNVYIVMELCEGGELLDRILSRGGKYTEEDAKTVMIQILNVVAFCHLQGVVHRDLKPENFLFTSKEDTSQLKAIDFGLSDYVRPDERLNDIVGSAYYVAPEVLHRSYSTEADIWSVGVIVYILLCGSRPFWARTESGIFRAVLKADPSFDDPPWPLLSSEARDFVKRLLNKDPRKRLTAAQALSHPWIKDSNDAKVPMDILVFKLMRAYLRSSSLRKAALRALSKTLTVDELFYLREQFALLEPSKNGTISLENIKSALMKMATDAMKDSRIPEFLGQLSALQYRRMDFEEFCAAALSVHQLEALDRWEQHARCAYELFEKEGNRPIMIDELASELGLGPSVPVHAVLHDWLRHTDGKLSFLGFVKLLHGVSSRTIKAH</sequence>
<evidence type="ECO:0000250" key="1"/>
<evidence type="ECO:0000250" key="2">
    <source>
        <dbReference type="UniProtKB" id="Q9FKW4"/>
    </source>
</evidence>
<evidence type="ECO:0000250" key="3">
    <source>
        <dbReference type="UniProtKB" id="Q9SG12"/>
    </source>
</evidence>
<evidence type="ECO:0000255" key="4">
    <source>
        <dbReference type="PROSITE-ProRule" id="PRU00159"/>
    </source>
</evidence>
<evidence type="ECO:0000255" key="5">
    <source>
        <dbReference type="PROSITE-ProRule" id="PRU10027"/>
    </source>
</evidence>
<evidence type="ECO:0000256" key="6">
    <source>
        <dbReference type="SAM" id="MobiDB-lite"/>
    </source>
</evidence>
<evidence type="ECO:0000305" key="7"/>
<protein>
    <recommendedName>
        <fullName>CDPK-related kinase 5</fullName>
        <shortName>AtCRK5</shortName>
        <ecNumber>2.7.11.1</ecNumber>
    </recommendedName>
    <alternativeName>
        <fullName>Calcium/calmodulin-dependent protein kinase 1</fullName>
    </alternativeName>
</protein>
<reference key="1">
    <citation type="journal article" date="2005" name="Plant Sci.">
        <title>Biochemical and expression analysis of an Arabidopsis calcium-dependent protein kinase-related kinase.</title>
        <authorList>
            <person name="Du W."/>
            <person name="Wang Y."/>
            <person name="Liang S."/>
            <person name="Lu Y.-T."/>
        </authorList>
        <dbReference type="AGRICOLA" id="IND43694487"/>
    </citation>
    <scope>NUCLEOTIDE SEQUENCE [MRNA] (ISOFORM 1)</scope>
    <scope>GENE FAMILY</scope>
    <source>
        <strain>cv. Columbia</strain>
    </source>
</reference>
<reference key="2">
    <citation type="submission" date="1996-11" db="EMBL/GenBank/DDBJ databases">
        <authorList>
            <person name="Salchert K.D."/>
        </authorList>
    </citation>
    <scope>NUCLEOTIDE SEQUENCE [MRNA] (ISOFORM 1)</scope>
    <source>
        <strain>cv. Columbia</strain>
    </source>
</reference>
<reference key="3">
    <citation type="journal article" date="2000" name="Nature">
        <title>Sequence and analysis of chromosome 3 of the plant Arabidopsis thaliana.</title>
        <authorList>
            <person name="Salanoubat M."/>
            <person name="Lemcke K."/>
            <person name="Rieger M."/>
            <person name="Ansorge W."/>
            <person name="Unseld M."/>
            <person name="Fartmann B."/>
            <person name="Valle G."/>
            <person name="Bloecker H."/>
            <person name="Perez-Alonso M."/>
            <person name="Obermaier B."/>
            <person name="Delseny M."/>
            <person name="Boutry M."/>
            <person name="Grivell L.A."/>
            <person name="Mache R."/>
            <person name="Puigdomenech P."/>
            <person name="De Simone V."/>
            <person name="Choisne N."/>
            <person name="Artiguenave F."/>
            <person name="Robert C."/>
            <person name="Brottier P."/>
            <person name="Wincker P."/>
            <person name="Cattolico L."/>
            <person name="Weissenbach J."/>
            <person name="Saurin W."/>
            <person name="Quetier F."/>
            <person name="Schaefer M."/>
            <person name="Mueller-Auer S."/>
            <person name="Gabel C."/>
            <person name="Fuchs M."/>
            <person name="Benes V."/>
            <person name="Wurmbach E."/>
            <person name="Drzonek H."/>
            <person name="Erfle H."/>
            <person name="Jordan N."/>
            <person name="Bangert S."/>
            <person name="Wiedelmann R."/>
            <person name="Kranz H."/>
            <person name="Voss H."/>
            <person name="Holland R."/>
            <person name="Brandt P."/>
            <person name="Nyakatura G."/>
            <person name="Vezzi A."/>
            <person name="D'Angelo M."/>
            <person name="Pallavicini A."/>
            <person name="Toppo S."/>
            <person name="Simionati B."/>
            <person name="Conrad A."/>
            <person name="Hornischer K."/>
            <person name="Kauer G."/>
            <person name="Loehnert T.-H."/>
            <person name="Nordsiek G."/>
            <person name="Reichelt J."/>
            <person name="Scharfe M."/>
            <person name="Schoen O."/>
            <person name="Bargues M."/>
            <person name="Terol J."/>
            <person name="Climent J."/>
            <person name="Navarro P."/>
            <person name="Collado C."/>
            <person name="Perez-Perez A."/>
            <person name="Ottenwaelder B."/>
            <person name="Duchemin D."/>
            <person name="Cooke R."/>
            <person name="Laudie M."/>
            <person name="Berger-Llauro C."/>
            <person name="Purnelle B."/>
            <person name="Masuy D."/>
            <person name="de Haan M."/>
            <person name="Maarse A.C."/>
            <person name="Alcaraz J.-P."/>
            <person name="Cottet A."/>
            <person name="Casacuberta E."/>
            <person name="Monfort A."/>
            <person name="Argiriou A."/>
            <person name="Flores M."/>
            <person name="Liguori R."/>
            <person name="Vitale D."/>
            <person name="Mannhaupt G."/>
            <person name="Haase D."/>
            <person name="Schoof H."/>
            <person name="Rudd S."/>
            <person name="Zaccaria P."/>
            <person name="Mewes H.-W."/>
            <person name="Mayer K.F.X."/>
            <person name="Kaul S."/>
            <person name="Town C.D."/>
            <person name="Koo H.L."/>
            <person name="Tallon L.J."/>
            <person name="Jenkins J."/>
            <person name="Rooney T."/>
            <person name="Rizzo M."/>
            <person name="Walts A."/>
            <person name="Utterback T."/>
            <person name="Fujii C.Y."/>
            <person name="Shea T.P."/>
            <person name="Creasy T.H."/>
            <person name="Haas B."/>
            <person name="Maiti R."/>
            <person name="Wu D."/>
            <person name="Peterson J."/>
            <person name="Van Aken S."/>
            <person name="Pai G."/>
            <person name="Militscher J."/>
            <person name="Sellers P."/>
            <person name="Gill J.E."/>
            <person name="Feldblyum T.V."/>
            <person name="Preuss D."/>
            <person name="Lin X."/>
            <person name="Nierman W.C."/>
            <person name="Salzberg S.L."/>
            <person name="White O."/>
            <person name="Venter J.C."/>
            <person name="Fraser C.M."/>
            <person name="Kaneko T."/>
            <person name="Nakamura Y."/>
            <person name="Sato S."/>
            <person name="Kato T."/>
            <person name="Asamizu E."/>
            <person name="Sasamoto S."/>
            <person name="Kimura T."/>
            <person name="Idesawa K."/>
            <person name="Kawashima K."/>
            <person name="Kishida Y."/>
            <person name="Kiyokawa C."/>
            <person name="Kohara M."/>
            <person name="Matsumoto M."/>
            <person name="Matsuno A."/>
            <person name="Muraki A."/>
            <person name="Nakayama S."/>
            <person name="Nakazaki N."/>
            <person name="Shinpo S."/>
            <person name="Takeuchi C."/>
            <person name="Wada T."/>
            <person name="Watanabe A."/>
            <person name="Yamada M."/>
            <person name="Yasuda M."/>
            <person name="Tabata S."/>
        </authorList>
    </citation>
    <scope>NUCLEOTIDE SEQUENCE [LARGE SCALE GENOMIC DNA]</scope>
    <source>
        <strain>cv. Columbia</strain>
    </source>
</reference>
<reference key="4">
    <citation type="journal article" date="2017" name="Plant J.">
        <title>Araport11: a complete reannotation of the Arabidopsis thaliana reference genome.</title>
        <authorList>
            <person name="Cheng C.Y."/>
            <person name="Krishnakumar V."/>
            <person name="Chan A.P."/>
            <person name="Thibaud-Nissen F."/>
            <person name="Schobel S."/>
            <person name="Town C.D."/>
        </authorList>
    </citation>
    <scope>GENOME REANNOTATION</scope>
    <source>
        <strain>cv. Columbia</strain>
    </source>
</reference>
<reference key="5">
    <citation type="submission" date="2006-07" db="EMBL/GenBank/DDBJ databases">
        <title>Large-scale analysis of RIKEN Arabidopsis full-length (RAFL) cDNAs.</title>
        <authorList>
            <person name="Totoki Y."/>
            <person name="Seki M."/>
            <person name="Ishida J."/>
            <person name="Nakajima M."/>
            <person name="Enju A."/>
            <person name="Kamiya A."/>
            <person name="Narusaka M."/>
            <person name="Shin-i T."/>
            <person name="Nakagawa M."/>
            <person name="Sakamoto N."/>
            <person name="Oishi K."/>
            <person name="Kohara Y."/>
            <person name="Kobayashi M."/>
            <person name="Toyoda A."/>
            <person name="Sakaki Y."/>
            <person name="Sakurai T."/>
            <person name="Iida K."/>
            <person name="Akiyama K."/>
            <person name="Satou M."/>
            <person name="Toyoda T."/>
            <person name="Konagaya A."/>
            <person name="Carninci P."/>
            <person name="Kawai J."/>
            <person name="Hayashizaki Y."/>
            <person name="Shinozaki K."/>
        </authorList>
    </citation>
    <scope>NUCLEOTIDE SEQUENCE [LARGE SCALE MRNA] (ISOFORM 1)</scope>
    <source>
        <strain>cv. Columbia</strain>
    </source>
</reference>
<reference key="6">
    <citation type="journal article" date="2003" name="Gravit. Space Biol. Bull.">
        <title>Calcium-regulated protein kinases of plants.</title>
        <authorList>
            <person name="Harmon A.C."/>
        </authorList>
    </citation>
    <scope>REVIEW</scope>
    <scope>GENE FAMILY</scope>
</reference>
<reference key="7">
    <citation type="journal article" date="2003" name="Plant Physiol.">
        <title>The Arabidopsis CDPK-SnRK superfamily of protein kinases.</title>
        <authorList>
            <person name="Hrabak E.M."/>
            <person name="Chan C.W.M."/>
            <person name="Gribskov M."/>
            <person name="Harper J.F."/>
            <person name="Choi J.H."/>
            <person name="Halford N."/>
            <person name="Kudla J."/>
            <person name="Luan S."/>
            <person name="Nimmo H.G."/>
            <person name="Sussman M.R."/>
            <person name="Thomas M."/>
            <person name="Walker-Simmons K."/>
            <person name="Zhu J.-K."/>
            <person name="Harmon A.C."/>
        </authorList>
    </citation>
    <scope>GENE FAMILY</scope>
    <scope>NOMENCLATURE</scope>
    <source>
        <strain>cv. Columbia</strain>
    </source>
</reference>
<gene>
    <name type="primary">CRK5</name>
    <name type="synonym">CaMK1</name>
    <name type="ordered locus">At3g50530</name>
    <name type="ORF">T20E23.130</name>
</gene>
<keyword id="KW-0025">Alternative splicing</keyword>
<keyword id="KW-0067">ATP-binding</keyword>
<keyword id="KW-0106">Calcium</keyword>
<keyword id="KW-0418">Kinase</keyword>
<keyword id="KW-0449">Lipoprotein</keyword>
<keyword id="KW-0472">Membrane</keyword>
<keyword id="KW-0479">Metal-binding</keyword>
<keyword id="KW-0519">Myristate</keyword>
<keyword id="KW-0547">Nucleotide-binding</keyword>
<keyword id="KW-0597">Phosphoprotein</keyword>
<keyword id="KW-1185">Reference proteome</keyword>
<keyword id="KW-0677">Repeat</keyword>
<keyword id="KW-0723">Serine/threonine-protein kinase</keyword>
<keyword id="KW-0808">Transferase</keyword>
<name>CAMK5_ARATH</name>